<evidence type="ECO:0000250" key="1"/>
<evidence type="ECO:0000250" key="2">
    <source>
        <dbReference type="UniProtKB" id="P19320"/>
    </source>
</evidence>
<evidence type="ECO:0000255" key="3"/>
<evidence type="ECO:0000255" key="4">
    <source>
        <dbReference type="PROSITE-ProRule" id="PRU00114"/>
    </source>
</evidence>
<feature type="signal peptide" evidence="3">
    <location>
        <begin position="1"/>
        <end position="24"/>
    </location>
</feature>
<feature type="chain" id="PRO_0000014996" description="Vascular cell adhesion protein 1">
    <location>
        <begin position="25"/>
        <end position="739"/>
    </location>
</feature>
<feature type="chain" id="PRO_0000457761" description="Soluble Vascular Cell Adhesion Molecule-1">
    <location>
        <begin position="25"/>
        <end status="unknown"/>
    </location>
</feature>
<feature type="topological domain" description="Extracellular" evidence="3">
    <location>
        <begin position="25"/>
        <end position="698"/>
    </location>
</feature>
<feature type="transmembrane region" description="Helical" evidence="3">
    <location>
        <begin position="699"/>
        <end position="720"/>
    </location>
</feature>
<feature type="topological domain" description="Cytoplasmic" evidence="3">
    <location>
        <begin position="721"/>
        <end position="739"/>
    </location>
</feature>
<feature type="domain" description="Ig-like C2-type 1">
    <location>
        <begin position="25"/>
        <end position="105"/>
    </location>
</feature>
<feature type="domain" description="Ig-like C2-type 2">
    <location>
        <begin position="109"/>
        <end position="212"/>
    </location>
</feature>
<feature type="domain" description="Ig-like C2-type 3">
    <location>
        <begin position="223"/>
        <end position="309"/>
    </location>
</feature>
<feature type="domain" description="Ig-like C2-type 4">
    <location>
        <begin position="312"/>
        <end position="399"/>
    </location>
</feature>
<feature type="domain" description="Ig-like C2-type 5">
    <location>
        <begin position="408"/>
        <end position="506"/>
    </location>
</feature>
<feature type="domain" description="Ig-like C2-type 6">
    <location>
        <begin position="511"/>
        <end position="595"/>
    </location>
</feature>
<feature type="domain" description="Ig-like C2-type 7">
    <location>
        <begin position="600"/>
        <end position="684"/>
    </location>
</feature>
<feature type="glycosylation site" description="N-linked (GlcNAc...) asparagine" evidence="3">
    <location>
        <position position="76"/>
    </location>
</feature>
<feature type="glycosylation site" description="N-linked (GlcNAc...) asparagine" evidence="3">
    <location>
        <position position="77"/>
    </location>
</feature>
<feature type="glycosylation site" description="N-linked (GlcNAc...) asparagine" evidence="3">
    <location>
        <position position="273"/>
    </location>
</feature>
<feature type="glycosylation site" description="N-linked (GlcNAc...) asparagine" evidence="3">
    <location>
        <position position="531"/>
    </location>
</feature>
<feature type="disulfide bond" evidence="4">
    <location>
        <begin position="47"/>
        <end position="95"/>
    </location>
</feature>
<feature type="disulfide bond" evidence="4">
    <location>
        <begin position="52"/>
        <end position="99"/>
    </location>
</feature>
<feature type="disulfide bond" evidence="4">
    <location>
        <begin position="137"/>
        <end position="195"/>
    </location>
</feature>
<feature type="disulfide bond" evidence="4">
    <location>
        <begin position="246"/>
        <end position="291"/>
    </location>
</feature>
<feature type="disulfide bond" evidence="4">
    <location>
        <begin position="335"/>
        <end position="383"/>
    </location>
</feature>
<feature type="disulfide bond" evidence="4">
    <location>
        <begin position="534"/>
        <end position="579"/>
    </location>
</feature>
<sequence length="739" mass="81412">MPRKMVVIFGASNILWMVFAVSQASKMEIFLEPRVAAQIGDVISLTCSTTGCETPSFSWRTQIDSPLNGKVKNEGNNSTLTMDPVSFNNEHAYLCTATCGSKKLEKGIQVEIYSFPKDPEIQLSGPLEVGKPVTVTCLVRDVYPFDRLEMNLLNGNDLLQSKDFLEPMEKKSLETKSLEVTFTPTNEDIGKGLVCRAQLHMDEIDFEPKERETTKELQVYISPRNTFISVTPSMRLQEGGSVTMTCASEGLPPPQIFWSKKLDNGNLQLLSGNATLTLIAMRLEDSGTYVCEGVNEVGKDGKEVELIVQEKPFTVEISPGPQIIAQIGDSVVLTCGVTDCESPSFSWRTQIDSPLSGTVKVEGAKSTLTLSPVNLENEHSYLCTVTCGHKKLEKGIKVDLYSFPRDPEVEMSGLLVDGNPVTVSCEVPNVYPSDRLEIELFKGETIIESKSFLEDMDKKSLETKSLEMTFIPTTEDTGKVLVCLAKLHIDEMEFEPKQRQSTQTLYVNVAPRDTTVVVSPSSIVEEGSPVNMTCSSDGLPAPNILWSRRLSNGRLQSLSEDPILTLTSAKMEDSGIYVCEGINQAGISRKEVELIIQVAPKDIQLIAFPSESVKEGDTVIISCTCGNVPKTWIILKKKAETGDTVLKSRDGAYTIHKVQLEDAGVYECESKNEAGLQLRSLTLDVKGRENNKDYFSPELLVLYCASSLIIPAIGMIIYFARRANMKGSYSLVEAQKSKV</sequence>
<organism>
    <name type="scientific">Canis lupus familiaris</name>
    <name type="common">Dog</name>
    <name type="synonym">Canis familiaris</name>
    <dbReference type="NCBI Taxonomy" id="9615"/>
    <lineage>
        <taxon>Eukaryota</taxon>
        <taxon>Metazoa</taxon>
        <taxon>Chordata</taxon>
        <taxon>Craniata</taxon>
        <taxon>Vertebrata</taxon>
        <taxon>Euteleostomi</taxon>
        <taxon>Mammalia</taxon>
        <taxon>Eutheria</taxon>
        <taxon>Laurasiatheria</taxon>
        <taxon>Carnivora</taxon>
        <taxon>Caniformia</taxon>
        <taxon>Canidae</taxon>
        <taxon>Canis</taxon>
    </lineage>
</organism>
<keyword id="KW-0130">Cell adhesion</keyword>
<keyword id="KW-1003">Cell membrane</keyword>
<keyword id="KW-1015">Disulfide bond</keyword>
<keyword id="KW-0325">Glycoprotein</keyword>
<keyword id="KW-0393">Immunoglobulin domain</keyword>
<keyword id="KW-0472">Membrane</keyword>
<keyword id="KW-1185">Reference proteome</keyword>
<keyword id="KW-0677">Repeat</keyword>
<keyword id="KW-0964">Secreted</keyword>
<keyword id="KW-0732">Signal</keyword>
<keyword id="KW-0812">Transmembrane</keyword>
<keyword id="KW-1133">Transmembrane helix</keyword>
<keyword id="KW-0832">Ubl conjugation</keyword>
<reference key="1">
    <citation type="submission" date="1995-07" db="EMBL/GenBank/DDBJ databases">
        <title>Increased expression of VCAM-1 and ICAM-1 in early cardiac allograft arteriopathy in the dog.</title>
        <authorList>
            <person name="Ballantyne C.M."/>
            <person name="Clubb F.J."/>
            <person name="Perrard J.L."/>
            <person name="Radovencovic B."/>
            <person name="Youker K.A."/>
            <person name="Smith C.W."/>
            <person name="Entman M.L."/>
            <person name="Hawkins H.K."/>
            <person name="Frazier O.H."/>
            <person name="Willerson J.T."/>
        </authorList>
    </citation>
    <scope>NUCLEOTIDE SEQUENCE [MRNA]</scope>
</reference>
<name>VCAM1_CANLF</name>
<gene>
    <name type="primary">VCAM1</name>
</gene>
<proteinExistence type="evidence at transcript level"/>
<dbReference type="EMBL" id="U32086">
    <property type="protein sequence ID" value="AAA84866.1"/>
    <property type="molecule type" value="mRNA"/>
</dbReference>
<dbReference type="RefSeq" id="NP_001003298.1">
    <property type="nucleotide sequence ID" value="NM_001003298.1"/>
</dbReference>
<dbReference type="SMR" id="Q28260"/>
<dbReference type="FunCoup" id="Q28260">
    <property type="interactions" value="154"/>
</dbReference>
<dbReference type="STRING" id="9615.ENSCAFP00000029643"/>
<dbReference type="GlyCosmos" id="Q28260">
    <property type="glycosylation" value="4 sites, No reported glycans"/>
</dbReference>
<dbReference type="PaxDb" id="9612-ENSCAFP00000029643"/>
<dbReference type="GeneID" id="403982"/>
<dbReference type="KEGG" id="cfa:403982"/>
<dbReference type="CTD" id="7412"/>
<dbReference type="eggNOG" id="ENOG502QSKQ">
    <property type="taxonomic scope" value="Eukaryota"/>
</dbReference>
<dbReference type="InParanoid" id="Q28260"/>
<dbReference type="OrthoDB" id="10045578at2759"/>
<dbReference type="Proteomes" id="UP000002254">
    <property type="component" value="Unplaced"/>
</dbReference>
<dbReference type="Proteomes" id="UP000694429">
    <property type="component" value="Unplaced"/>
</dbReference>
<dbReference type="Proteomes" id="UP000694542">
    <property type="component" value="Unplaced"/>
</dbReference>
<dbReference type="Proteomes" id="UP000805418">
    <property type="component" value="Unplaced"/>
</dbReference>
<dbReference type="GO" id="GO:0005576">
    <property type="term" value="C:extracellular region"/>
    <property type="evidence" value="ECO:0007669"/>
    <property type="project" value="UniProtKB-SubCell"/>
</dbReference>
<dbReference type="GO" id="GO:0005886">
    <property type="term" value="C:plasma membrane"/>
    <property type="evidence" value="ECO:0000318"/>
    <property type="project" value="GO_Central"/>
</dbReference>
<dbReference type="GO" id="GO:0005178">
    <property type="term" value="F:integrin binding"/>
    <property type="evidence" value="ECO:0000318"/>
    <property type="project" value="GO_Central"/>
</dbReference>
<dbReference type="GO" id="GO:0007155">
    <property type="term" value="P:cell adhesion"/>
    <property type="evidence" value="ECO:0000318"/>
    <property type="project" value="GO_Central"/>
</dbReference>
<dbReference type="GO" id="GO:0098609">
    <property type="term" value="P:cell-cell adhesion"/>
    <property type="evidence" value="ECO:0007669"/>
    <property type="project" value="InterPro"/>
</dbReference>
<dbReference type="CDD" id="cd00096">
    <property type="entry name" value="Ig"/>
    <property type="match status" value="1"/>
</dbReference>
<dbReference type="CDD" id="cd07689">
    <property type="entry name" value="IgC2_VCAM-1"/>
    <property type="match status" value="2"/>
</dbReference>
<dbReference type="FunFam" id="2.60.40.10:FF:000625">
    <property type="entry name" value="Vascular cell adhesion molecule 1"/>
    <property type="match status" value="2"/>
</dbReference>
<dbReference type="FunFam" id="2.60.40.10:FF:000671">
    <property type="entry name" value="Vascular cell adhesion molecule 1"/>
    <property type="match status" value="2"/>
</dbReference>
<dbReference type="FunFam" id="2.60.40.10:FF:000782">
    <property type="entry name" value="Vascular cell adhesion molecule 1"/>
    <property type="match status" value="2"/>
</dbReference>
<dbReference type="FunFam" id="2.60.40.10:FF:000817">
    <property type="entry name" value="Vascular cell adhesion molecule 1"/>
    <property type="match status" value="1"/>
</dbReference>
<dbReference type="Gene3D" id="2.60.40.10">
    <property type="entry name" value="Immunoglobulins"/>
    <property type="match status" value="7"/>
</dbReference>
<dbReference type="InterPro" id="IPR047012">
    <property type="entry name" value="ICAM_VCAM"/>
</dbReference>
<dbReference type="InterPro" id="IPR003987">
    <property type="entry name" value="ICAM_VCAM_N"/>
</dbReference>
<dbReference type="InterPro" id="IPR007110">
    <property type="entry name" value="Ig-like_dom"/>
</dbReference>
<dbReference type="InterPro" id="IPR036179">
    <property type="entry name" value="Ig-like_dom_sf"/>
</dbReference>
<dbReference type="InterPro" id="IPR013783">
    <property type="entry name" value="Ig-like_fold"/>
</dbReference>
<dbReference type="InterPro" id="IPR008424">
    <property type="entry name" value="Ig_C2-set"/>
</dbReference>
<dbReference type="InterPro" id="IPR013098">
    <property type="entry name" value="Ig_I-set"/>
</dbReference>
<dbReference type="InterPro" id="IPR003599">
    <property type="entry name" value="Ig_sub"/>
</dbReference>
<dbReference type="InterPro" id="IPR003598">
    <property type="entry name" value="Ig_sub2"/>
</dbReference>
<dbReference type="InterPro" id="IPR013151">
    <property type="entry name" value="Immunoglobulin_dom"/>
</dbReference>
<dbReference type="InterPro" id="IPR003989">
    <property type="entry name" value="VCAM-1"/>
</dbReference>
<dbReference type="PANTHER" id="PTHR13771">
    <property type="entry name" value="INTERCELLULAR ADHESION MOLECULE"/>
    <property type="match status" value="1"/>
</dbReference>
<dbReference type="PANTHER" id="PTHR13771:SF14">
    <property type="entry name" value="VASCULAR CELL ADHESION PROTEIN 1"/>
    <property type="match status" value="1"/>
</dbReference>
<dbReference type="Pfam" id="PF05790">
    <property type="entry name" value="C2-set"/>
    <property type="match status" value="2"/>
</dbReference>
<dbReference type="Pfam" id="PF07679">
    <property type="entry name" value="I-set"/>
    <property type="match status" value="2"/>
</dbReference>
<dbReference type="Pfam" id="PF00047">
    <property type="entry name" value="ig"/>
    <property type="match status" value="1"/>
</dbReference>
<dbReference type="Pfam" id="PF13927">
    <property type="entry name" value="Ig_3"/>
    <property type="match status" value="2"/>
</dbReference>
<dbReference type="PRINTS" id="PR01472">
    <property type="entry name" value="ICAMVCAM1"/>
</dbReference>
<dbReference type="PRINTS" id="PR01474">
    <property type="entry name" value="VCAM1"/>
</dbReference>
<dbReference type="SMART" id="SM00409">
    <property type="entry name" value="IG"/>
    <property type="match status" value="6"/>
</dbReference>
<dbReference type="SMART" id="SM00408">
    <property type="entry name" value="IGc2"/>
    <property type="match status" value="5"/>
</dbReference>
<dbReference type="SUPFAM" id="SSF48726">
    <property type="entry name" value="Immunoglobulin"/>
    <property type="match status" value="7"/>
</dbReference>
<dbReference type="PROSITE" id="PS50835">
    <property type="entry name" value="IG_LIKE"/>
    <property type="match status" value="5"/>
</dbReference>
<comment type="function">
    <text evidence="2">Cell adhesion glycoprotein predominantly expressed on the surface of endothelial cells that plays an important role in immune surveillance and inflammation. Acts as a major regulator of leukocyte adhesion to the endothelium through interaction with different types of integrins. During inflammatory responses, binds ligands on the surface of activated endothelial cells to initiate the activation of calcium channels and the plasma membrane-associated small GTPase RAC1 leading to leukocyte transendothelial migration. Also serves as a quality-control checkpoint for entry into bone marrow by providing a 'don't-eat-me' stamping in the context of major histocompatibility complex (MHC) class-I presentation.</text>
</comment>
<comment type="subcellular location">
    <molecule>Vascular cell adhesion protein 1</molecule>
    <subcellularLocation>
        <location evidence="2">Cell membrane</location>
        <topology evidence="2">Single-pass type I membrane protein</topology>
    </subcellularLocation>
</comment>
<comment type="subcellular location">
    <molecule>Soluble Vascular Cell Adhesion Molecule-1</molecule>
    <subcellularLocation>
        <location evidence="2">Secreted</location>
    </subcellularLocation>
</comment>
<comment type="domain">
    <text evidence="1">Either the first or the fourth Ig-like C2-type domain is required for VLA4-dependent cell adhesion.</text>
</comment>
<comment type="PTM">
    <text evidence="2">Cleaved by the metalloproteinase ADAM17 to generate the soluble form.</text>
</comment>
<comment type="PTM">
    <text evidence="2">Sialoglycoprotein.</text>
</comment>
<comment type="PTM">
    <text evidence="2">Ubiquitinated by TRIM65 via 'Lys-48'-linked ubiquitination; leading to proteasomal degradation.</text>
</comment>
<protein>
    <recommendedName>
        <fullName>Vascular cell adhesion protein 1</fullName>
        <shortName>V-CAM 1</shortName>
        <shortName>VCAM-1</shortName>
    </recommendedName>
    <cdAntigenName>CD106</cdAntigenName>
    <component>
        <recommendedName>
            <fullName>Soluble Vascular Cell Adhesion Molecule-1</fullName>
        </recommendedName>
    </component>
</protein>
<accession>Q28260</accession>